<keyword id="KW-0067">ATP-binding</keyword>
<keyword id="KW-0963">Cytoplasm</keyword>
<keyword id="KW-0227">DNA damage</keyword>
<keyword id="KW-0234">DNA repair</keyword>
<keyword id="KW-0235">DNA replication</keyword>
<keyword id="KW-0238">DNA-binding</keyword>
<keyword id="KW-0547">Nucleotide-binding</keyword>
<keyword id="KW-0742">SOS response</keyword>
<protein>
    <recommendedName>
        <fullName evidence="1">DNA replication and repair protein RecF</fullName>
    </recommendedName>
</protein>
<sequence length="367" mass="41811">MSLRRIMVTAVRNLHPVTLLPSPRINILYGSNGSGKTSVLEAVHLLGLARSFRSTRLNPVIQYEQAACTVFGEVQLTEGGTSNLGVSRERQGEFTIRIDGQNARSAAQLAELLPLQLINPDSFRLLEGAPKIRRQFLDWGVFHVEPRFLPAWQRLQKALRQRNSWLRHGTLDPASQAAWDRELCLASAEIDEYRRNYIKALKPVFERTLSELVELDGLTLSYYRGWDKDRELQEVLASSLLRDQQMGHTQAGPQRADLRLRLAGNNAADILSRGQQKLVVCALRIAQGHLVSQARRGHCIYLVDDLPSELDDQHRRALCRLLEELRCQVFITCVDHELLREGWQTETPVALFHVEQGRITQTHDHRE</sequence>
<feature type="chain" id="PRO_1000048559" description="DNA replication and repair protein RecF">
    <location>
        <begin position="1"/>
        <end position="367"/>
    </location>
</feature>
<feature type="binding site" evidence="1">
    <location>
        <begin position="30"/>
        <end position="37"/>
    </location>
    <ligand>
        <name>ATP</name>
        <dbReference type="ChEBI" id="CHEBI:30616"/>
    </ligand>
</feature>
<comment type="function">
    <text evidence="1">The RecF protein is involved in DNA metabolism; it is required for DNA replication and normal SOS inducibility. RecF binds preferentially to single-stranded, linear DNA. It also seems to bind ATP.</text>
</comment>
<comment type="subcellular location">
    <subcellularLocation>
        <location evidence="1">Cytoplasm</location>
    </subcellularLocation>
</comment>
<comment type="similarity">
    <text evidence="1">Belongs to the RecF family.</text>
</comment>
<reference key="1">
    <citation type="submission" date="2007-05" db="EMBL/GenBank/DDBJ databases">
        <title>Complete sequence of Pseudomonas putida F1.</title>
        <authorList>
            <consortium name="US DOE Joint Genome Institute"/>
            <person name="Copeland A."/>
            <person name="Lucas S."/>
            <person name="Lapidus A."/>
            <person name="Barry K."/>
            <person name="Detter J.C."/>
            <person name="Glavina del Rio T."/>
            <person name="Hammon N."/>
            <person name="Israni S."/>
            <person name="Dalin E."/>
            <person name="Tice H."/>
            <person name="Pitluck S."/>
            <person name="Chain P."/>
            <person name="Malfatti S."/>
            <person name="Shin M."/>
            <person name="Vergez L."/>
            <person name="Schmutz J."/>
            <person name="Larimer F."/>
            <person name="Land M."/>
            <person name="Hauser L."/>
            <person name="Kyrpides N."/>
            <person name="Lykidis A."/>
            <person name="Parales R."/>
            <person name="Richardson P."/>
        </authorList>
    </citation>
    <scope>NUCLEOTIDE SEQUENCE [LARGE SCALE GENOMIC DNA]</scope>
    <source>
        <strain>ATCC 700007 / DSM 6899 / JCM 31910 / BCRC 17059 / LMG 24140 / F1</strain>
    </source>
</reference>
<gene>
    <name evidence="1" type="primary">recF</name>
    <name type="ordered locus">Pput_0003</name>
</gene>
<name>RECF_PSEP1</name>
<proteinExistence type="inferred from homology"/>
<dbReference type="EMBL" id="CP000712">
    <property type="protein sequence ID" value="ABQ76180.1"/>
    <property type="molecule type" value="Genomic_DNA"/>
</dbReference>
<dbReference type="SMR" id="A5VWC0"/>
<dbReference type="KEGG" id="ppf:Pput_0003"/>
<dbReference type="eggNOG" id="COG1195">
    <property type="taxonomic scope" value="Bacteria"/>
</dbReference>
<dbReference type="HOGENOM" id="CLU_040267_0_0_6"/>
<dbReference type="GO" id="GO:0005737">
    <property type="term" value="C:cytoplasm"/>
    <property type="evidence" value="ECO:0007669"/>
    <property type="project" value="UniProtKB-SubCell"/>
</dbReference>
<dbReference type="GO" id="GO:0005524">
    <property type="term" value="F:ATP binding"/>
    <property type="evidence" value="ECO:0007669"/>
    <property type="project" value="UniProtKB-UniRule"/>
</dbReference>
<dbReference type="GO" id="GO:0003697">
    <property type="term" value="F:single-stranded DNA binding"/>
    <property type="evidence" value="ECO:0007669"/>
    <property type="project" value="UniProtKB-UniRule"/>
</dbReference>
<dbReference type="GO" id="GO:0006260">
    <property type="term" value="P:DNA replication"/>
    <property type="evidence" value="ECO:0007669"/>
    <property type="project" value="UniProtKB-UniRule"/>
</dbReference>
<dbReference type="GO" id="GO:0000731">
    <property type="term" value="P:DNA synthesis involved in DNA repair"/>
    <property type="evidence" value="ECO:0007669"/>
    <property type="project" value="TreeGrafter"/>
</dbReference>
<dbReference type="GO" id="GO:0006302">
    <property type="term" value="P:double-strand break repair"/>
    <property type="evidence" value="ECO:0007669"/>
    <property type="project" value="TreeGrafter"/>
</dbReference>
<dbReference type="GO" id="GO:0009432">
    <property type="term" value="P:SOS response"/>
    <property type="evidence" value="ECO:0007669"/>
    <property type="project" value="UniProtKB-UniRule"/>
</dbReference>
<dbReference type="FunFam" id="1.20.1050.90:FF:000003">
    <property type="entry name" value="DNA replication and repair protein RecF"/>
    <property type="match status" value="1"/>
</dbReference>
<dbReference type="Gene3D" id="3.40.50.300">
    <property type="entry name" value="P-loop containing nucleotide triphosphate hydrolases"/>
    <property type="match status" value="1"/>
</dbReference>
<dbReference type="Gene3D" id="1.20.1050.90">
    <property type="entry name" value="RecF/RecN/SMC, N-terminal domain"/>
    <property type="match status" value="1"/>
</dbReference>
<dbReference type="HAMAP" id="MF_00365">
    <property type="entry name" value="RecF"/>
    <property type="match status" value="1"/>
</dbReference>
<dbReference type="InterPro" id="IPR001238">
    <property type="entry name" value="DNA-binding_RecF"/>
</dbReference>
<dbReference type="InterPro" id="IPR018078">
    <property type="entry name" value="DNA-binding_RecF_CS"/>
</dbReference>
<dbReference type="InterPro" id="IPR027417">
    <property type="entry name" value="P-loop_NTPase"/>
</dbReference>
<dbReference type="InterPro" id="IPR003395">
    <property type="entry name" value="RecF/RecN/SMC_N"/>
</dbReference>
<dbReference type="InterPro" id="IPR042174">
    <property type="entry name" value="RecF_2"/>
</dbReference>
<dbReference type="NCBIfam" id="TIGR00611">
    <property type="entry name" value="recf"/>
    <property type="match status" value="1"/>
</dbReference>
<dbReference type="PANTHER" id="PTHR32182">
    <property type="entry name" value="DNA REPLICATION AND REPAIR PROTEIN RECF"/>
    <property type="match status" value="1"/>
</dbReference>
<dbReference type="PANTHER" id="PTHR32182:SF0">
    <property type="entry name" value="DNA REPLICATION AND REPAIR PROTEIN RECF"/>
    <property type="match status" value="1"/>
</dbReference>
<dbReference type="Pfam" id="PF02463">
    <property type="entry name" value="SMC_N"/>
    <property type="match status" value="1"/>
</dbReference>
<dbReference type="SUPFAM" id="SSF52540">
    <property type="entry name" value="P-loop containing nucleoside triphosphate hydrolases"/>
    <property type="match status" value="1"/>
</dbReference>
<dbReference type="PROSITE" id="PS00617">
    <property type="entry name" value="RECF_1"/>
    <property type="match status" value="1"/>
</dbReference>
<dbReference type="PROSITE" id="PS00618">
    <property type="entry name" value="RECF_2"/>
    <property type="match status" value="1"/>
</dbReference>
<organism>
    <name type="scientific">Pseudomonas putida (strain ATCC 700007 / DSM 6899 / JCM 31910 / BCRC 17059 / LMG 24140 / F1)</name>
    <dbReference type="NCBI Taxonomy" id="351746"/>
    <lineage>
        <taxon>Bacteria</taxon>
        <taxon>Pseudomonadati</taxon>
        <taxon>Pseudomonadota</taxon>
        <taxon>Gammaproteobacteria</taxon>
        <taxon>Pseudomonadales</taxon>
        <taxon>Pseudomonadaceae</taxon>
        <taxon>Pseudomonas</taxon>
    </lineage>
</organism>
<evidence type="ECO:0000255" key="1">
    <source>
        <dbReference type="HAMAP-Rule" id="MF_00365"/>
    </source>
</evidence>
<accession>A5VWC0</accession>